<feature type="signal peptide" evidence="1">
    <location>
        <begin position="1"/>
        <end position="21"/>
    </location>
</feature>
<feature type="chain" id="PRO_0000036309" description="UPF0319 protein VP1009">
    <location>
        <begin position="22"/>
        <end position="217"/>
    </location>
</feature>
<comment type="similarity">
    <text evidence="1">Belongs to the UPF0319 family.</text>
</comment>
<proteinExistence type="inferred from homology"/>
<name>Y1009_VIBPA</name>
<keyword id="KW-0732">Signal</keyword>
<accession>Q87QY9</accession>
<protein>
    <recommendedName>
        <fullName evidence="1">UPF0319 protein VP1009</fullName>
    </recommendedName>
</protein>
<sequence length="217" mass="24353">MRLKTWIVAFFLGLFGTTVNADTTHKTDVSVTLSTAQGVQVLFVNGVSTDELSTPYTLIDGSNQVVIKVNKAIGRGDKRTQVYSAPYILGFSSGAGELYIDAPSFRDKRQADKLFEKDTMDWKVSINDKSIDYSQYKMPGKKGAFPYSNLDEQLAEYNELNGVYFSNGKRVELSELQATGTAKETHRVNSPLTKAKIAYLEMTDEERQLFMKWVSQQ</sequence>
<reference key="1">
    <citation type="journal article" date="2003" name="Lancet">
        <title>Genome sequence of Vibrio parahaemolyticus: a pathogenic mechanism distinct from that of V. cholerae.</title>
        <authorList>
            <person name="Makino K."/>
            <person name="Oshima K."/>
            <person name="Kurokawa K."/>
            <person name="Yokoyama K."/>
            <person name="Uda T."/>
            <person name="Tagomori K."/>
            <person name="Iijima Y."/>
            <person name="Najima M."/>
            <person name="Nakano M."/>
            <person name="Yamashita A."/>
            <person name="Kubota Y."/>
            <person name="Kimura S."/>
            <person name="Yasunaga T."/>
            <person name="Honda T."/>
            <person name="Shinagawa H."/>
            <person name="Hattori M."/>
            <person name="Iida T."/>
        </authorList>
    </citation>
    <scope>NUCLEOTIDE SEQUENCE [LARGE SCALE GENOMIC DNA]</scope>
    <source>
        <strain>RIMD 2210633</strain>
    </source>
</reference>
<gene>
    <name type="ordered locus">VP1009</name>
</gene>
<evidence type="ECO:0000255" key="1">
    <source>
        <dbReference type="HAMAP-Rule" id="MF_00789"/>
    </source>
</evidence>
<organism>
    <name type="scientific">Vibrio parahaemolyticus serotype O3:K6 (strain RIMD 2210633)</name>
    <dbReference type="NCBI Taxonomy" id="223926"/>
    <lineage>
        <taxon>Bacteria</taxon>
        <taxon>Pseudomonadati</taxon>
        <taxon>Pseudomonadota</taxon>
        <taxon>Gammaproteobacteria</taxon>
        <taxon>Vibrionales</taxon>
        <taxon>Vibrionaceae</taxon>
        <taxon>Vibrio</taxon>
    </lineage>
</organism>
<dbReference type="EMBL" id="BA000031">
    <property type="protein sequence ID" value="BAC59272.1"/>
    <property type="molecule type" value="Genomic_DNA"/>
</dbReference>
<dbReference type="RefSeq" id="NP_797388.1">
    <property type="nucleotide sequence ID" value="NC_004603.1"/>
</dbReference>
<dbReference type="RefSeq" id="WP_005481843.1">
    <property type="nucleotide sequence ID" value="NC_004603.1"/>
</dbReference>
<dbReference type="GeneID" id="1188513"/>
<dbReference type="KEGG" id="vpa:VP1009"/>
<dbReference type="PATRIC" id="fig|223926.6.peg.956"/>
<dbReference type="eggNOG" id="COG3110">
    <property type="taxonomic scope" value="Bacteria"/>
</dbReference>
<dbReference type="HOGENOM" id="CLU_073782_3_0_6"/>
<dbReference type="Proteomes" id="UP000002493">
    <property type="component" value="Chromosome 1"/>
</dbReference>
<dbReference type="HAMAP" id="MF_00789">
    <property type="entry name" value="UPF0319"/>
    <property type="match status" value="1"/>
</dbReference>
<dbReference type="InterPro" id="IPR018635">
    <property type="entry name" value="UPF0319"/>
</dbReference>
<dbReference type="PANTHER" id="PTHR38108">
    <property type="entry name" value="UPF0319 PROTEIN YCCT"/>
    <property type="match status" value="1"/>
</dbReference>
<dbReference type="PANTHER" id="PTHR38108:SF1">
    <property type="entry name" value="UPF0319 PROTEIN YCCT"/>
    <property type="match status" value="1"/>
</dbReference>
<dbReference type="Pfam" id="PF09829">
    <property type="entry name" value="DUF2057"/>
    <property type="match status" value="1"/>
</dbReference>